<feature type="chain" id="PRO_0000214019" description="Acyl-CoA-binding protein 2">
    <location>
        <begin position="1"/>
        <end position="40" status="greater than"/>
    </location>
</feature>
<feature type="domain" description="ACB" evidence="2">
    <location>
        <begin position="2"/>
        <end position="40" status="greater than"/>
    </location>
</feature>
<feature type="region of interest" description="Disordered" evidence="3">
    <location>
        <begin position="1"/>
        <end position="25"/>
    </location>
</feature>
<feature type="compositionally biased region" description="Basic and acidic residues" evidence="3">
    <location>
        <begin position="1"/>
        <end position="15"/>
    </location>
</feature>
<feature type="non-terminal residue">
    <location>
        <position position="40"/>
    </location>
</feature>
<dbReference type="SMR" id="P81625"/>
<dbReference type="GO" id="GO:0005737">
    <property type="term" value="C:cytoplasm"/>
    <property type="evidence" value="ECO:0007669"/>
    <property type="project" value="UniProtKB-SubCell"/>
</dbReference>
<dbReference type="GO" id="GO:0000062">
    <property type="term" value="F:fatty-acyl-CoA binding"/>
    <property type="evidence" value="ECO:0007669"/>
    <property type="project" value="InterPro"/>
</dbReference>
<dbReference type="GO" id="GO:0006631">
    <property type="term" value="P:fatty acid metabolic process"/>
    <property type="evidence" value="ECO:0007669"/>
    <property type="project" value="TreeGrafter"/>
</dbReference>
<dbReference type="Gene3D" id="1.20.80.10">
    <property type="match status" value="1"/>
</dbReference>
<dbReference type="InterPro" id="IPR022408">
    <property type="entry name" value="Acyl-CoA-binding_prot_CS"/>
</dbReference>
<dbReference type="InterPro" id="IPR000582">
    <property type="entry name" value="Acyl-CoA-binding_protein"/>
</dbReference>
<dbReference type="InterPro" id="IPR035984">
    <property type="entry name" value="Acyl-CoA-binding_sf"/>
</dbReference>
<dbReference type="InterPro" id="IPR014352">
    <property type="entry name" value="FERM/acyl-CoA-bd_prot_sf"/>
</dbReference>
<dbReference type="PANTHER" id="PTHR23310:SF62">
    <property type="entry name" value="ACYL-COA BINDING PROTEIN 1, ISOFORM A"/>
    <property type="match status" value="1"/>
</dbReference>
<dbReference type="PANTHER" id="PTHR23310">
    <property type="entry name" value="ACYL-COA-BINDING PROTEIN, ACBP"/>
    <property type="match status" value="1"/>
</dbReference>
<dbReference type="Pfam" id="PF00887">
    <property type="entry name" value="ACBP"/>
    <property type="match status" value="1"/>
</dbReference>
<dbReference type="PRINTS" id="PR00689">
    <property type="entry name" value="ACOABINDINGP"/>
</dbReference>
<dbReference type="SUPFAM" id="SSF47027">
    <property type="entry name" value="Acyl-CoA binding protein"/>
    <property type="match status" value="1"/>
</dbReference>
<dbReference type="PROSITE" id="PS00880">
    <property type="entry name" value="ACB_1"/>
    <property type="match status" value="1"/>
</dbReference>
<dbReference type="PROSITE" id="PS51228">
    <property type="entry name" value="ACB_2"/>
    <property type="match status" value="1"/>
</dbReference>
<accession>P81625</accession>
<reference key="1">
    <citation type="journal article" date="2000" name="Planta">
        <title>Isolation and characterization of two acyl-CoA-binding proteins from proembryogenic masses of Digitalis lanata Ehrh.</title>
        <authorList>
            <person name="Metzner M."/>
            <person name="Ruecknagel K.P."/>
            <person name="Knudsen J."/>
            <person name="Kuellertz G."/>
            <person name="Mueller-Uri F."/>
            <person name="Diettrich B."/>
        </authorList>
    </citation>
    <scope>PROTEIN SEQUENCE</scope>
</reference>
<protein>
    <recommendedName>
        <fullName>Acyl-CoA-binding protein 2</fullName>
        <shortName>ACBP 2</shortName>
    </recommendedName>
</protein>
<organism>
    <name type="scientific">Digitalis lanata</name>
    <name type="common">Grecian foxglove</name>
    <dbReference type="NCBI Taxonomy" id="49450"/>
    <lineage>
        <taxon>Eukaryota</taxon>
        <taxon>Viridiplantae</taxon>
        <taxon>Streptophyta</taxon>
        <taxon>Embryophyta</taxon>
        <taxon>Tracheophyta</taxon>
        <taxon>Spermatophyta</taxon>
        <taxon>Magnoliopsida</taxon>
        <taxon>eudicotyledons</taxon>
        <taxon>Gunneridae</taxon>
        <taxon>Pentapetalae</taxon>
        <taxon>asterids</taxon>
        <taxon>lamiids</taxon>
        <taxon>Lamiales</taxon>
        <taxon>Plantaginaceae</taxon>
        <taxon>Digitalideae</taxon>
        <taxon>Digitalis</taxon>
    </lineage>
</organism>
<evidence type="ECO:0000250" key="1"/>
<evidence type="ECO:0000255" key="2">
    <source>
        <dbReference type="PROSITE-ProRule" id="PRU00573"/>
    </source>
</evidence>
<evidence type="ECO:0000256" key="3">
    <source>
        <dbReference type="SAM" id="MobiDB-lite"/>
    </source>
</evidence>
<evidence type="ECO:0000305" key="4"/>
<keyword id="KW-0963">Cytoplasm</keyword>
<keyword id="KW-0903">Direct protein sequencing</keyword>
<keyword id="KW-0446">Lipid-binding</keyword>
<keyword id="KW-0813">Transport</keyword>
<name>ACBP2_DIGLA</name>
<comment type="function">
    <text evidence="1">Binds medium- and long-chain acyl-CoA esters with very high affinity and may function as an intracellular carrier of acyl-CoA esters.</text>
</comment>
<comment type="subcellular location">
    <subcellularLocation>
        <location>Cytoplasm</location>
    </subcellularLocation>
</comment>
<comment type="similarity">
    <text evidence="4">Belongs to the ACBP family.</text>
</comment>
<sequence length="40" mass="4482">ALKEEFEEHAEKAKTLPENTSSENKLTLYGLYKQATVGNV</sequence>
<proteinExistence type="evidence at protein level"/>